<keyword id="KW-1185">Reference proteome</keyword>
<keyword id="KW-0687">Ribonucleoprotein</keyword>
<keyword id="KW-0689">Ribosomal protein</keyword>
<proteinExistence type="evidence at protein level"/>
<gene>
    <name type="primary">RPS8A</name>
    <name type="ordered locus">At5g20290</name>
    <name type="ORF">F5O24_180</name>
</gene>
<reference key="1">
    <citation type="journal article" date="2000" name="Nature">
        <title>Sequence and analysis of chromosome 5 of the plant Arabidopsis thaliana.</title>
        <authorList>
            <person name="Tabata S."/>
            <person name="Kaneko T."/>
            <person name="Nakamura Y."/>
            <person name="Kotani H."/>
            <person name="Kato T."/>
            <person name="Asamizu E."/>
            <person name="Miyajima N."/>
            <person name="Sasamoto S."/>
            <person name="Kimura T."/>
            <person name="Hosouchi T."/>
            <person name="Kawashima K."/>
            <person name="Kohara M."/>
            <person name="Matsumoto M."/>
            <person name="Matsuno A."/>
            <person name="Muraki A."/>
            <person name="Nakayama S."/>
            <person name="Nakazaki N."/>
            <person name="Naruo K."/>
            <person name="Okumura S."/>
            <person name="Shinpo S."/>
            <person name="Takeuchi C."/>
            <person name="Wada T."/>
            <person name="Watanabe A."/>
            <person name="Yamada M."/>
            <person name="Yasuda M."/>
            <person name="Sato S."/>
            <person name="de la Bastide M."/>
            <person name="Huang E."/>
            <person name="Spiegel L."/>
            <person name="Gnoj L."/>
            <person name="O'Shaughnessy A."/>
            <person name="Preston R."/>
            <person name="Habermann K."/>
            <person name="Murray J."/>
            <person name="Johnson D."/>
            <person name="Rohlfing T."/>
            <person name="Nelson J."/>
            <person name="Stoneking T."/>
            <person name="Pepin K."/>
            <person name="Spieth J."/>
            <person name="Sekhon M."/>
            <person name="Armstrong J."/>
            <person name="Becker M."/>
            <person name="Belter E."/>
            <person name="Cordum H."/>
            <person name="Cordes M."/>
            <person name="Courtney L."/>
            <person name="Courtney W."/>
            <person name="Dante M."/>
            <person name="Du H."/>
            <person name="Edwards J."/>
            <person name="Fryman J."/>
            <person name="Haakensen B."/>
            <person name="Lamar E."/>
            <person name="Latreille P."/>
            <person name="Leonard S."/>
            <person name="Meyer R."/>
            <person name="Mulvaney E."/>
            <person name="Ozersky P."/>
            <person name="Riley A."/>
            <person name="Strowmatt C."/>
            <person name="Wagner-McPherson C."/>
            <person name="Wollam A."/>
            <person name="Yoakum M."/>
            <person name="Bell M."/>
            <person name="Dedhia N."/>
            <person name="Parnell L."/>
            <person name="Shah R."/>
            <person name="Rodriguez M."/>
            <person name="Hoon See L."/>
            <person name="Vil D."/>
            <person name="Baker J."/>
            <person name="Kirchoff K."/>
            <person name="Toth K."/>
            <person name="King L."/>
            <person name="Bahret A."/>
            <person name="Miller B."/>
            <person name="Marra M.A."/>
            <person name="Martienssen R."/>
            <person name="McCombie W.R."/>
            <person name="Wilson R.K."/>
            <person name="Murphy G."/>
            <person name="Bancroft I."/>
            <person name="Volckaert G."/>
            <person name="Wambutt R."/>
            <person name="Duesterhoeft A."/>
            <person name="Stiekema W."/>
            <person name="Pohl T."/>
            <person name="Entian K.-D."/>
            <person name="Terryn N."/>
            <person name="Hartley N."/>
            <person name="Bent E."/>
            <person name="Johnson S."/>
            <person name="Langham S.-A."/>
            <person name="McCullagh B."/>
            <person name="Robben J."/>
            <person name="Grymonprez B."/>
            <person name="Zimmermann W."/>
            <person name="Ramsperger U."/>
            <person name="Wedler H."/>
            <person name="Balke K."/>
            <person name="Wedler E."/>
            <person name="Peters S."/>
            <person name="van Staveren M."/>
            <person name="Dirkse W."/>
            <person name="Mooijman P."/>
            <person name="Klein Lankhorst R."/>
            <person name="Weitzenegger T."/>
            <person name="Bothe G."/>
            <person name="Rose M."/>
            <person name="Hauf J."/>
            <person name="Berneiser S."/>
            <person name="Hempel S."/>
            <person name="Feldpausch M."/>
            <person name="Lamberth S."/>
            <person name="Villarroel R."/>
            <person name="Gielen J."/>
            <person name="Ardiles W."/>
            <person name="Bents O."/>
            <person name="Lemcke K."/>
            <person name="Kolesov G."/>
            <person name="Mayer K.F.X."/>
            <person name="Rudd S."/>
            <person name="Schoof H."/>
            <person name="Schueller C."/>
            <person name="Zaccaria P."/>
            <person name="Mewes H.-W."/>
            <person name="Bevan M."/>
            <person name="Fransz P.F."/>
        </authorList>
    </citation>
    <scope>NUCLEOTIDE SEQUENCE [LARGE SCALE GENOMIC DNA]</scope>
    <source>
        <strain>cv. Columbia</strain>
    </source>
</reference>
<reference key="2">
    <citation type="journal article" date="2017" name="Plant J.">
        <title>Araport11: a complete reannotation of the Arabidopsis thaliana reference genome.</title>
        <authorList>
            <person name="Cheng C.Y."/>
            <person name="Krishnakumar V."/>
            <person name="Chan A.P."/>
            <person name="Thibaud-Nissen F."/>
            <person name="Schobel S."/>
            <person name="Town C.D."/>
        </authorList>
    </citation>
    <scope>GENOME REANNOTATION</scope>
    <source>
        <strain>cv. Columbia</strain>
    </source>
</reference>
<reference key="3">
    <citation type="journal article" date="2003" name="Science">
        <title>Empirical analysis of transcriptional activity in the Arabidopsis genome.</title>
        <authorList>
            <person name="Yamada K."/>
            <person name="Lim J."/>
            <person name="Dale J.M."/>
            <person name="Chen H."/>
            <person name="Shinn P."/>
            <person name="Palm C.J."/>
            <person name="Southwick A.M."/>
            <person name="Wu H.C."/>
            <person name="Kim C.J."/>
            <person name="Nguyen M."/>
            <person name="Pham P.K."/>
            <person name="Cheuk R.F."/>
            <person name="Karlin-Newmann G."/>
            <person name="Liu S.X."/>
            <person name="Lam B."/>
            <person name="Sakano H."/>
            <person name="Wu T."/>
            <person name="Yu G."/>
            <person name="Miranda M."/>
            <person name="Quach H.L."/>
            <person name="Tripp M."/>
            <person name="Chang C.H."/>
            <person name="Lee J.M."/>
            <person name="Toriumi M.J."/>
            <person name="Chan M.M."/>
            <person name="Tang C.C."/>
            <person name="Onodera C.S."/>
            <person name="Deng J.M."/>
            <person name="Akiyama K."/>
            <person name="Ansari Y."/>
            <person name="Arakawa T."/>
            <person name="Banh J."/>
            <person name="Banno F."/>
            <person name="Bowser L."/>
            <person name="Brooks S.Y."/>
            <person name="Carninci P."/>
            <person name="Chao Q."/>
            <person name="Choy N."/>
            <person name="Enju A."/>
            <person name="Goldsmith A.D."/>
            <person name="Gurjal M."/>
            <person name="Hansen N.F."/>
            <person name="Hayashizaki Y."/>
            <person name="Johnson-Hopson C."/>
            <person name="Hsuan V.W."/>
            <person name="Iida K."/>
            <person name="Karnes M."/>
            <person name="Khan S."/>
            <person name="Koesema E."/>
            <person name="Ishida J."/>
            <person name="Jiang P.X."/>
            <person name="Jones T."/>
            <person name="Kawai J."/>
            <person name="Kamiya A."/>
            <person name="Meyers C."/>
            <person name="Nakajima M."/>
            <person name="Narusaka M."/>
            <person name="Seki M."/>
            <person name="Sakurai T."/>
            <person name="Satou M."/>
            <person name="Tamse R."/>
            <person name="Vaysberg M."/>
            <person name="Wallender E.K."/>
            <person name="Wong C."/>
            <person name="Yamamura Y."/>
            <person name="Yuan S."/>
            <person name="Shinozaki K."/>
            <person name="Davis R.W."/>
            <person name="Theologis A."/>
            <person name="Ecker J.R."/>
        </authorList>
    </citation>
    <scope>NUCLEOTIDE SEQUENCE [LARGE SCALE MRNA]</scope>
    <source>
        <strain>cv. Columbia</strain>
    </source>
</reference>
<reference key="4">
    <citation type="submission" date="2006-07" db="EMBL/GenBank/DDBJ databases">
        <title>Large-scale analysis of RIKEN Arabidopsis full-length (RAFL) cDNAs.</title>
        <authorList>
            <person name="Totoki Y."/>
            <person name="Seki M."/>
            <person name="Ishida J."/>
            <person name="Nakajima M."/>
            <person name="Enju A."/>
            <person name="Kamiya A."/>
            <person name="Narusaka M."/>
            <person name="Shin-i T."/>
            <person name="Nakagawa M."/>
            <person name="Sakamoto N."/>
            <person name="Oishi K."/>
            <person name="Kohara Y."/>
            <person name="Kobayashi M."/>
            <person name="Toyoda A."/>
            <person name="Sakaki Y."/>
            <person name="Sakurai T."/>
            <person name="Iida K."/>
            <person name="Akiyama K."/>
            <person name="Satou M."/>
            <person name="Toyoda T."/>
            <person name="Konagaya A."/>
            <person name="Carninci P."/>
            <person name="Kawai J."/>
            <person name="Hayashizaki Y."/>
            <person name="Shinozaki K."/>
        </authorList>
    </citation>
    <scope>NUCLEOTIDE SEQUENCE [LARGE SCALE MRNA]</scope>
    <source>
        <strain>cv. Columbia</strain>
    </source>
</reference>
<reference key="5">
    <citation type="submission" date="2002-03" db="EMBL/GenBank/DDBJ databases">
        <title>Full-length cDNA from Arabidopsis thaliana.</title>
        <authorList>
            <person name="Brover V.V."/>
            <person name="Troukhan M.E."/>
            <person name="Alexandrov N.A."/>
            <person name="Lu Y.-P."/>
            <person name="Flavell R.B."/>
            <person name="Feldmann K.A."/>
        </authorList>
    </citation>
    <scope>NUCLEOTIDE SEQUENCE [LARGE SCALE MRNA]</scope>
</reference>
<reference key="6">
    <citation type="journal article" date="2001" name="Plant Physiol.">
        <title>The organization of cytoplasmic ribosomal protein genes in the Arabidopsis genome.</title>
        <authorList>
            <person name="Barakat A."/>
            <person name="Szick-Miranda K."/>
            <person name="Chang I.-F."/>
            <person name="Guyot R."/>
            <person name="Blanc G."/>
            <person name="Cooke R."/>
            <person name="Delseny M."/>
            <person name="Bailey-Serres J."/>
        </authorList>
    </citation>
    <scope>GENE FAMILY ORGANIZATION</scope>
    <scope>NOMENCLATURE</scope>
</reference>
<reference key="7">
    <citation type="journal article" date="2007" name="Mol. Cell. Proteomics">
        <title>Multidimensional protein identification technology (MudPIT) analysis of ubiquitinated proteins in plants.</title>
        <authorList>
            <person name="Maor R."/>
            <person name="Jones A."/>
            <person name="Nuehse T.S."/>
            <person name="Studholme D.J."/>
            <person name="Peck S.C."/>
            <person name="Shirasu K."/>
        </authorList>
    </citation>
    <scope>IDENTIFICATION BY MASS SPECTROMETRY [LARGE SCALE ANALYSIS]</scope>
    <source>
        <strain>cv. Landsberg erecta</strain>
    </source>
</reference>
<reference key="8">
    <citation type="journal article" date="2023" name="Plant Cell">
        <title>An updated nomenclature for plant ribosomal protein genes.</title>
        <authorList>
            <person name="Scarpin M.R."/>
            <person name="Busche M."/>
            <person name="Martinez R.E."/>
            <person name="Harper L.C."/>
            <person name="Reiser L."/>
            <person name="Szakonyi D."/>
            <person name="Merchante C."/>
            <person name="Lan T."/>
            <person name="Xiong W."/>
            <person name="Mo B."/>
            <person name="Tang G."/>
            <person name="Chen X."/>
            <person name="Bailey-Serres J."/>
            <person name="Browning K.S."/>
            <person name="Brunkard J.O."/>
        </authorList>
    </citation>
    <scope>NOMENCLATURE</scope>
</reference>
<protein>
    <recommendedName>
        <fullName evidence="2">Small ribosomal subunit protein eS8z</fullName>
    </recommendedName>
    <alternativeName>
        <fullName>40S ribosomal protein S8-1</fullName>
    </alternativeName>
</protein>
<comment type="similarity">
    <text evidence="3">Belongs to the eukaryotic ribosomal protein eS8 family.</text>
</comment>
<feature type="chain" id="PRO_0000250222" description="Small ribosomal subunit protein eS8z">
    <location>
        <begin position="1"/>
        <end position="222"/>
    </location>
</feature>
<feature type="region of interest" description="Disordered" evidence="1">
    <location>
        <begin position="1"/>
        <end position="37"/>
    </location>
</feature>
<feature type="region of interest" description="Disordered" evidence="1">
    <location>
        <begin position="125"/>
        <end position="147"/>
    </location>
</feature>
<feature type="compositionally biased region" description="Basic residues" evidence="1">
    <location>
        <begin position="8"/>
        <end position="26"/>
    </location>
</feature>
<organism>
    <name type="scientific">Arabidopsis thaliana</name>
    <name type="common">Mouse-ear cress</name>
    <dbReference type="NCBI Taxonomy" id="3702"/>
    <lineage>
        <taxon>Eukaryota</taxon>
        <taxon>Viridiplantae</taxon>
        <taxon>Streptophyta</taxon>
        <taxon>Embryophyta</taxon>
        <taxon>Tracheophyta</taxon>
        <taxon>Spermatophyta</taxon>
        <taxon>Magnoliopsida</taxon>
        <taxon>eudicotyledons</taxon>
        <taxon>Gunneridae</taxon>
        <taxon>Pentapetalae</taxon>
        <taxon>rosids</taxon>
        <taxon>malvids</taxon>
        <taxon>Brassicales</taxon>
        <taxon>Brassicaceae</taxon>
        <taxon>Camelineae</taxon>
        <taxon>Arabidopsis</taxon>
    </lineage>
</organism>
<sequence>MGISRDSIHKRRATGGKQKQWRKKRKYEMGRQPANTKLSSNKTVRRIRVRGGNVKWRALRLDTGNYSWGSEATTRKTRVLDVVYNASNNELVRTKTLVKSAIVQVDAAPFKQWYLSHYGVELGRKKKSASSTKKDGEEGEEAAVAAPEEVKKSNHLLRKIASRQEGRSLDSHIEDQFASGRLLACISSRPGQCGRADGYILEGKELEFYMKKIQKKKGKGAA</sequence>
<evidence type="ECO:0000256" key="1">
    <source>
        <dbReference type="SAM" id="MobiDB-lite"/>
    </source>
</evidence>
<evidence type="ECO:0000303" key="2">
    <source>
    </source>
</evidence>
<evidence type="ECO:0000305" key="3"/>
<accession>Q93VG5</accession>
<name>RS81_ARATH</name>
<dbReference type="EMBL" id="AF296825">
    <property type="status" value="NOT_ANNOTATED_CDS"/>
    <property type="molecule type" value="Genomic_DNA"/>
</dbReference>
<dbReference type="EMBL" id="CP002688">
    <property type="protein sequence ID" value="AED92825.1"/>
    <property type="molecule type" value="Genomic_DNA"/>
</dbReference>
<dbReference type="EMBL" id="AY050937">
    <property type="protein sequence ID" value="AAK93614.1"/>
    <property type="molecule type" value="mRNA"/>
</dbReference>
<dbReference type="EMBL" id="AY052338">
    <property type="protein sequence ID" value="AAK96530.1"/>
    <property type="molecule type" value="mRNA"/>
</dbReference>
<dbReference type="EMBL" id="AY061909">
    <property type="protein sequence ID" value="AAL31236.1"/>
    <property type="molecule type" value="mRNA"/>
</dbReference>
<dbReference type="EMBL" id="AY091172">
    <property type="protein sequence ID" value="AAM14111.1"/>
    <property type="molecule type" value="mRNA"/>
</dbReference>
<dbReference type="EMBL" id="AK226280">
    <property type="protein sequence ID" value="BAE98439.1"/>
    <property type="molecule type" value="mRNA"/>
</dbReference>
<dbReference type="EMBL" id="AY086963">
    <property type="protein sequence ID" value="AAM64526.1"/>
    <property type="molecule type" value="mRNA"/>
</dbReference>
<dbReference type="RefSeq" id="NP_197529.1">
    <property type="nucleotide sequence ID" value="NM_122036.5"/>
</dbReference>
<dbReference type="SMR" id="Q93VG5"/>
<dbReference type="BioGRID" id="17427">
    <property type="interactions" value="164"/>
</dbReference>
<dbReference type="FunCoup" id="Q93VG5">
    <property type="interactions" value="3179"/>
</dbReference>
<dbReference type="IntAct" id="Q93VG5">
    <property type="interactions" value="1"/>
</dbReference>
<dbReference type="STRING" id="3702.Q93VG5"/>
<dbReference type="iPTMnet" id="Q93VG5"/>
<dbReference type="MetOSite" id="Q93VG5"/>
<dbReference type="PaxDb" id="3702-AT5G20290.1"/>
<dbReference type="ProteomicsDB" id="226804"/>
<dbReference type="EnsemblPlants" id="AT5G20290.1">
    <property type="protein sequence ID" value="AT5G20290.1"/>
    <property type="gene ID" value="AT5G20290"/>
</dbReference>
<dbReference type="GeneID" id="832151"/>
<dbReference type="Gramene" id="AT5G20290.1">
    <property type="protein sequence ID" value="AT5G20290.1"/>
    <property type="gene ID" value="AT5G20290"/>
</dbReference>
<dbReference type="KEGG" id="ath:AT5G20290"/>
<dbReference type="Araport" id="AT5G20290"/>
<dbReference type="TAIR" id="AT5G20290"/>
<dbReference type="eggNOG" id="KOG3283">
    <property type="taxonomic scope" value="Eukaryota"/>
</dbReference>
<dbReference type="HOGENOM" id="CLU_080597_1_1_1"/>
<dbReference type="InParanoid" id="Q93VG5"/>
<dbReference type="OMA" id="IPSANTX"/>
<dbReference type="OrthoDB" id="1703270at2759"/>
<dbReference type="PhylomeDB" id="Q93VG5"/>
<dbReference type="CD-CODE" id="4299E36E">
    <property type="entry name" value="Nucleolus"/>
</dbReference>
<dbReference type="PRO" id="PR:Q93VG5"/>
<dbReference type="Proteomes" id="UP000006548">
    <property type="component" value="Chromosome 5"/>
</dbReference>
<dbReference type="ExpressionAtlas" id="Q93VG5">
    <property type="expression patterns" value="baseline and differential"/>
</dbReference>
<dbReference type="GO" id="GO:0009507">
    <property type="term" value="C:chloroplast"/>
    <property type="evidence" value="ECO:0007005"/>
    <property type="project" value="TAIR"/>
</dbReference>
<dbReference type="GO" id="GO:0022626">
    <property type="term" value="C:cytosolic ribosome"/>
    <property type="evidence" value="ECO:0007005"/>
    <property type="project" value="TAIR"/>
</dbReference>
<dbReference type="GO" id="GO:0022627">
    <property type="term" value="C:cytosolic small ribosomal subunit"/>
    <property type="evidence" value="ECO:0007005"/>
    <property type="project" value="TAIR"/>
</dbReference>
<dbReference type="GO" id="GO:0005730">
    <property type="term" value="C:nucleolus"/>
    <property type="evidence" value="ECO:0007005"/>
    <property type="project" value="TAIR"/>
</dbReference>
<dbReference type="GO" id="GO:0009505">
    <property type="term" value="C:plant-type cell wall"/>
    <property type="evidence" value="ECO:0007005"/>
    <property type="project" value="TAIR"/>
</dbReference>
<dbReference type="GO" id="GO:0009506">
    <property type="term" value="C:plasmodesma"/>
    <property type="evidence" value="ECO:0007005"/>
    <property type="project" value="TAIR"/>
</dbReference>
<dbReference type="GO" id="GO:0003729">
    <property type="term" value="F:mRNA binding"/>
    <property type="evidence" value="ECO:0000314"/>
    <property type="project" value="TAIR"/>
</dbReference>
<dbReference type="GO" id="GO:0003735">
    <property type="term" value="F:structural constituent of ribosome"/>
    <property type="evidence" value="ECO:0000314"/>
    <property type="project" value="CAFA"/>
</dbReference>
<dbReference type="GO" id="GO:0006412">
    <property type="term" value="P:translation"/>
    <property type="evidence" value="ECO:0007669"/>
    <property type="project" value="InterPro"/>
</dbReference>
<dbReference type="CDD" id="cd11380">
    <property type="entry name" value="Ribosomal_S8e_like"/>
    <property type="match status" value="1"/>
</dbReference>
<dbReference type="FunFam" id="1.10.168.20:FF:000002">
    <property type="entry name" value="40S ribosomal protein S8"/>
    <property type="match status" value="1"/>
</dbReference>
<dbReference type="FunFam" id="3.10.290.70:FF:000003">
    <property type="entry name" value="40S ribosomal protein S8"/>
    <property type="match status" value="1"/>
</dbReference>
<dbReference type="Gene3D" id="3.10.290.70">
    <property type="match status" value="1"/>
</dbReference>
<dbReference type="Gene3D" id="1.10.168.20">
    <property type="entry name" value="Ribosomal protein S8e, subdomain"/>
    <property type="match status" value="1"/>
</dbReference>
<dbReference type="InterPro" id="IPR001047">
    <property type="entry name" value="Ribosomal_eS8"/>
</dbReference>
<dbReference type="InterPro" id="IPR018283">
    <property type="entry name" value="Ribosomal_eS8_CS"/>
</dbReference>
<dbReference type="InterPro" id="IPR042563">
    <property type="entry name" value="Ribosomal_protein_eS8_euk"/>
</dbReference>
<dbReference type="InterPro" id="IPR022309">
    <property type="entry name" value="Ribosomal_Se8/biogenesis_NSA2"/>
</dbReference>
<dbReference type="NCBIfam" id="TIGR00307">
    <property type="entry name" value="eS8"/>
    <property type="match status" value="1"/>
</dbReference>
<dbReference type="PANTHER" id="PTHR10394">
    <property type="entry name" value="40S RIBOSOMAL PROTEIN S8"/>
    <property type="match status" value="1"/>
</dbReference>
<dbReference type="Pfam" id="PF01201">
    <property type="entry name" value="Ribosomal_S8e"/>
    <property type="match status" value="1"/>
</dbReference>
<dbReference type="PROSITE" id="PS01193">
    <property type="entry name" value="RIBOSOMAL_S8E"/>
    <property type="match status" value="1"/>
</dbReference>